<keyword id="KW-0963">Cytoplasm</keyword>
<keyword id="KW-0275">Fatty acid biosynthesis</keyword>
<keyword id="KW-0276">Fatty acid metabolism</keyword>
<keyword id="KW-0444">Lipid biosynthesis</keyword>
<keyword id="KW-0443">Lipid metabolism</keyword>
<keyword id="KW-0596">Phosphopantetheine</keyword>
<keyword id="KW-0597">Phosphoprotein</keyword>
<proteinExistence type="inferred from homology"/>
<organism>
    <name type="scientific">Xylella fastidiosa (strain M12)</name>
    <dbReference type="NCBI Taxonomy" id="405440"/>
    <lineage>
        <taxon>Bacteria</taxon>
        <taxon>Pseudomonadati</taxon>
        <taxon>Pseudomonadota</taxon>
        <taxon>Gammaproteobacteria</taxon>
        <taxon>Lysobacterales</taxon>
        <taxon>Lysobacteraceae</taxon>
        <taxon>Xylella</taxon>
    </lineage>
</organism>
<dbReference type="EMBL" id="CP000941">
    <property type="protein sequence ID" value="ACA12553.1"/>
    <property type="molecule type" value="Genomic_DNA"/>
</dbReference>
<dbReference type="RefSeq" id="WP_004083472.1">
    <property type="nucleotide sequence ID" value="NC_010513.1"/>
</dbReference>
<dbReference type="SMR" id="B0U3X4"/>
<dbReference type="GeneID" id="93905324"/>
<dbReference type="KEGG" id="xfm:Xfasm12_1644"/>
<dbReference type="HOGENOM" id="CLU_108696_5_1_6"/>
<dbReference type="UniPathway" id="UPA00094"/>
<dbReference type="GO" id="GO:0005829">
    <property type="term" value="C:cytosol"/>
    <property type="evidence" value="ECO:0007669"/>
    <property type="project" value="TreeGrafter"/>
</dbReference>
<dbReference type="GO" id="GO:0016020">
    <property type="term" value="C:membrane"/>
    <property type="evidence" value="ECO:0007669"/>
    <property type="project" value="GOC"/>
</dbReference>
<dbReference type="GO" id="GO:0000035">
    <property type="term" value="F:acyl binding"/>
    <property type="evidence" value="ECO:0007669"/>
    <property type="project" value="TreeGrafter"/>
</dbReference>
<dbReference type="GO" id="GO:0000036">
    <property type="term" value="F:acyl carrier activity"/>
    <property type="evidence" value="ECO:0007669"/>
    <property type="project" value="UniProtKB-UniRule"/>
</dbReference>
<dbReference type="GO" id="GO:0009245">
    <property type="term" value="P:lipid A biosynthetic process"/>
    <property type="evidence" value="ECO:0007669"/>
    <property type="project" value="TreeGrafter"/>
</dbReference>
<dbReference type="FunFam" id="1.10.1200.10:FF:000001">
    <property type="entry name" value="Acyl carrier protein"/>
    <property type="match status" value="1"/>
</dbReference>
<dbReference type="Gene3D" id="1.10.1200.10">
    <property type="entry name" value="ACP-like"/>
    <property type="match status" value="1"/>
</dbReference>
<dbReference type="HAMAP" id="MF_01217">
    <property type="entry name" value="Acyl_carrier"/>
    <property type="match status" value="1"/>
</dbReference>
<dbReference type="InterPro" id="IPR003231">
    <property type="entry name" value="ACP"/>
</dbReference>
<dbReference type="InterPro" id="IPR036736">
    <property type="entry name" value="ACP-like_sf"/>
</dbReference>
<dbReference type="InterPro" id="IPR009081">
    <property type="entry name" value="PP-bd_ACP"/>
</dbReference>
<dbReference type="InterPro" id="IPR006162">
    <property type="entry name" value="Ppantetheine_attach_site"/>
</dbReference>
<dbReference type="NCBIfam" id="TIGR00517">
    <property type="entry name" value="acyl_carrier"/>
    <property type="match status" value="1"/>
</dbReference>
<dbReference type="NCBIfam" id="NF002148">
    <property type="entry name" value="PRK00982.1-2"/>
    <property type="match status" value="1"/>
</dbReference>
<dbReference type="NCBIfam" id="NF002149">
    <property type="entry name" value="PRK00982.1-3"/>
    <property type="match status" value="1"/>
</dbReference>
<dbReference type="NCBIfam" id="NF002150">
    <property type="entry name" value="PRK00982.1-4"/>
    <property type="match status" value="1"/>
</dbReference>
<dbReference type="NCBIfam" id="NF002151">
    <property type="entry name" value="PRK00982.1-5"/>
    <property type="match status" value="1"/>
</dbReference>
<dbReference type="PANTHER" id="PTHR20863">
    <property type="entry name" value="ACYL CARRIER PROTEIN"/>
    <property type="match status" value="1"/>
</dbReference>
<dbReference type="PANTHER" id="PTHR20863:SF76">
    <property type="entry name" value="CARRIER DOMAIN-CONTAINING PROTEIN"/>
    <property type="match status" value="1"/>
</dbReference>
<dbReference type="Pfam" id="PF00550">
    <property type="entry name" value="PP-binding"/>
    <property type="match status" value="1"/>
</dbReference>
<dbReference type="SUPFAM" id="SSF47336">
    <property type="entry name" value="ACP-like"/>
    <property type="match status" value="1"/>
</dbReference>
<dbReference type="PROSITE" id="PS50075">
    <property type="entry name" value="CARRIER"/>
    <property type="match status" value="1"/>
</dbReference>
<dbReference type="PROSITE" id="PS00012">
    <property type="entry name" value="PHOSPHOPANTETHEINE"/>
    <property type="match status" value="1"/>
</dbReference>
<protein>
    <recommendedName>
        <fullName evidence="1">Acyl carrier protein</fullName>
        <shortName evidence="1">ACP</shortName>
    </recommendedName>
</protein>
<feature type="chain" id="PRO_1000139078" description="Acyl carrier protein">
    <location>
        <begin position="1"/>
        <end position="79"/>
    </location>
</feature>
<feature type="domain" description="Carrier" evidence="2">
    <location>
        <begin position="2"/>
        <end position="77"/>
    </location>
</feature>
<feature type="modified residue" description="O-(pantetheine 4'-phosphoryl)serine" evidence="2">
    <location>
        <position position="37"/>
    </location>
</feature>
<reference key="1">
    <citation type="journal article" date="2010" name="J. Bacteriol.">
        <title>Whole genome sequences of two Xylella fastidiosa strains (M12 and M23) causing almond leaf scorch disease in California.</title>
        <authorList>
            <person name="Chen J."/>
            <person name="Xie G."/>
            <person name="Han S."/>
            <person name="Chertkov O."/>
            <person name="Sims D."/>
            <person name="Civerolo E.L."/>
        </authorList>
    </citation>
    <scope>NUCLEOTIDE SEQUENCE [LARGE SCALE GENOMIC DNA]</scope>
    <source>
        <strain>M12</strain>
    </source>
</reference>
<gene>
    <name evidence="1" type="primary">acpP</name>
    <name type="ordered locus">Xfasm12_1644</name>
</gene>
<comment type="function">
    <text evidence="1">Carrier of the growing fatty acid chain in fatty acid biosynthesis.</text>
</comment>
<comment type="pathway">
    <text evidence="1">Lipid metabolism; fatty acid biosynthesis.</text>
</comment>
<comment type="subcellular location">
    <subcellularLocation>
        <location evidence="1">Cytoplasm</location>
    </subcellularLocation>
</comment>
<comment type="PTM">
    <text evidence="1">4'-phosphopantetheine is transferred from CoA to a specific serine of apo-ACP by AcpS. This modification is essential for activity because fatty acids are bound in thioester linkage to the sulfhydryl of the prosthetic group.</text>
</comment>
<comment type="similarity">
    <text evidence="1">Belongs to the acyl carrier protein (ACP) family.</text>
</comment>
<accession>B0U3X4</accession>
<sequence>MSDIEARVRKIVAEKLNVDEEKVTNTSTFVDELGADSLDTVELVMALEDEFQCEIGDEAAEKMTSVQHAIDYIKSNAKC</sequence>
<evidence type="ECO:0000255" key="1">
    <source>
        <dbReference type="HAMAP-Rule" id="MF_01217"/>
    </source>
</evidence>
<evidence type="ECO:0000255" key="2">
    <source>
        <dbReference type="PROSITE-ProRule" id="PRU00258"/>
    </source>
</evidence>
<name>ACP_XYLFM</name>